<accession>P62154</accession>
<accession>P07181</accession>
<accession>Q9V3T4</accession>
<comment type="function">
    <text>Calmodulin mediates the control of a large number of enzymes, ion channels and other proteins by Ca(2+). Among the enzymes to be stimulated by the calmodulin-Ca(2+) complex are a number of protein kinases and phosphatases.</text>
</comment>
<comment type="PTM">
    <text>The N-terminus is blocked.</text>
</comment>
<comment type="miscellaneous">
    <text>This protein has four functional calcium-binding sites.</text>
</comment>
<comment type="similarity">
    <text evidence="4">Belongs to the calmodulin family.</text>
</comment>
<name>CALM_LOCMI</name>
<sequence>MADQLTEEQIAEFKEAFSLFDKDGDGTITTKELGTVMRSLGQNPTEAELQDMINEVDADGNGTIDFPEFLTMMARKMKDTDSEEEIREAFRVFDKDGNGFISAAELRHVMTNLGEKLTDEEVDEMIREADIDGDGQVNYEEFVTMMTSK</sequence>
<organism>
    <name type="scientific">Locusta migratoria</name>
    <name type="common">Migratory locust</name>
    <dbReference type="NCBI Taxonomy" id="7004"/>
    <lineage>
        <taxon>Eukaryota</taxon>
        <taxon>Metazoa</taxon>
        <taxon>Ecdysozoa</taxon>
        <taxon>Arthropoda</taxon>
        <taxon>Hexapoda</taxon>
        <taxon>Insecta</taxon>
        <taxon>Pterygota</taxon>
        <taxon>Neoptera</taxon>
        <taxon>Polyneoptera</taxon>
        <taxon>Orthoptera</taxon>
        <taxon>Caelifera</taxon>
        <taxon>Acrididea</taxon>
        <taxon>Acridomorpha</taxon>
        <taxon>Acridoidea</taxon>
        <taxon>Acrididae</taxon>
        <taxon>Oedipodinae</taxon>
        <taxon>Locusta</taxon>
    </lineage>
</organism>
<evidence type="ECO:0000250" key="1"/>
<evidence type="ECO:0000255" key="2">
    <source>
        <dbReference type="PROSITE-ProRule" id="PRU00448"/>
    </source>
</evidence>
<evidence type="ECO:0000269" key="3">
    <source ref="1"/>
</evidence>
<evidence type="ECO:0000305" key="4"/>
<proteinExistence type="evidence at protein level"/>
<feature type="initiator methionine" description="Removed" evidence="3">
    <location>
        <position position="1"/>
    </location>
</feature>
<feature type="chain" id="PRO_0000198279" description="Calmodulin">
    <location>
        <begin position="2"/>
        <end position="149"/>
    </location>
</feature>
<feature type="domain" description="EF-hand 1" evidence="2">
    <location>
        <begin position="8"/>
        <end position="43"/>
    </location>
</feature>
<feature type="domain" description="EF-hand 2" evidence="2">
    <location>
        <begin position="44"/>
        <end position="79"/>
    </location>
</feature>
<feature type="domain" description="EF-hand 3" evidence="2">
    <location>
        <begin position="81"/>
        <end position="116"/>
    </location>
</feature>
<feature type="domain" description="EF-hand 4" evidence="2">
    <location>
        <begin position="117"/>
        <end position="149"/>
    </location>
</feature>
<feature type="binding site" evidence="2">
    <location>
        <position position="21"/>
    </location>
    <ligand>
        <name>Ca(2+)</name>
        <dbReference type="ChEBI" id="CHEBI:29108"/>
        <label>1</label>
    </ligand>
</feature>
<feature type="binding site" evidence="2">
    <location>
        <position position="23"/>
    </location>
    <ligand>
        <name>Ca(2+)</name>
        <dbReference type="ChEBI" id="CHEBI:29108"/>
        <label>1</label>
    </ligand>
</feature>
<feature type="binding site" evidence="2">
    <location>
        <position position="25"/>
    </location>
    <ligand>
        <name>Ca(2+)</name>
        <dbReference type="ChEBI" id="CHEBI:29108"/>
        <label>1</label>
    </ligand>
</feature>
<feature type="binding site" evidence="2">
    <location>
        <position position="27"/>
    </location>
    <ligand>
        <name>Ca(2+)</name>
        <dbReference type="ChEBI" id="CHEBI:29108"/>
        <label>1</label>
    </ligand>
</feature>
<feature type="binding site" evidence="2">
    <location>
        <position position="32"/>
    </location>
    <ligand>
        <name>Ca(2+)</name>
        <dbReference type="ChEBI" id="CHEBI:29108"/>
        <label>1</label>
    </ligand>
</feature>
<feature type="binding site" evidence="2">
    <location>
        <position position="57"/>
    </location>
    <ligand>
        <name>Ca(2+)</name>
        <dbReference type="ChEBI" id="CHEBI:29108"/>
        <label>2</label>
    </ligand>
</feature>
<feature type="binding site" evidence="2">
    <location>
        <position position="59"/>
    </location>
    <ligand>
        <name>Ca(2+)</name>
        <dbReference type="ChEBI" id="CHEBI:29108"/>
        <label>2</label>
    </ligand>
</feature>
<feature type="binding site" evidence="2">
    <location>
        <position position="61"/>
    </location>
    <ligand>
        <name>Ca(2+)</name>
        <dbReference type="ChEBI" id="CHEBI:29108"/>
        <label>2</label>
    </ligand>
</feature>
<feature type="binding site" evidence="2">
    <location>
        <position position="63"/>
    </location>
    <ligand>
        <name>Ca(2+)</name>
        <dbReference type="ChEBI" id="CHEBI:29108"/>
        <label>2</label>
    </ligand>
</feature>
<feature type="binding site" evidence="2">
    <location>
        <position position="68"/>
    </location>
    <ligand>
        <name>Ca(2+)</name>
        <dbReference type="ChEBI" id="CHEBI:29108"/>
        <label>2</label>
    </ligand>
</feature>
<feature type="binding site" evidence="2">
    <location>
        <position position="94"/>
    </location>
    <ligand>
        <name>Ca(2+)</name>
        <dbReference type="ChEBI" id="CHEBI:29108"/>
        <label>3</label>
    </ligand>
</feature>
<feature type="binding site" evidence="2">
    <location>
        <position position="96"/>
    </location>
    <ligand>
        <name>Ca(2+)</name>
        <dbReference type="ChEBI" id="CHEBI:29108"/>
        <label>3</label>
    </ligand>
</feature>
<feature type="binding site" evidence="2">
    <location>
        <position position="98"/>
    </location>
    <ligand>
        <name>Ca(2+)</name>
        <dbReference type="ChEBI" id="CHEBI:29108"/>
        <label>3</label>
    </ligand>
</feature>
<feature type="binding site" evidence="2">
    <location>
        <position position="105"/>
    </location>
    <ligand>
        <name>Ca(2+)</name>
        <dbReference type="ChEBI" id="CHEBI:29108"/>
        <label>3</label>
    </ligand>
</feature>
<feature type="binding site" evidence="2">
    <location>
        <position position="130"/>
    </location>
    <ligand>
        <name>Ca(2+)</name>
        <dbReference type="ChEBI" id="CHEBI:29108"/>
        <label>4</label>
    </ligand>
</feature>
<feature type="binding site" evidence="2">
    <location>
        <position position="132"/>
    </location>
    <ligand>
        <name>Ca(2+)</name>
        <dbReference type="ChEBI" id="CHEBI:29108"/>
        <label>4</label>
    </ligand>
</feature>
<feature type="binding site" evidence="2">
    <location>
        <position position="134"/>
    </location>
    <ligand>
        <name>Ca(2+)</name>
        <dbReference type="ChEBI" id="CHEBI:29108"/>
        <label>4</label>
    </ligand>
</feature>
<feature type="binding site" evidence="2">
    <location>
        <position position="136"/>
    </location>
    <ligand>
        <name>Ca(2+)</name>
        <dbReference type="ChEBI" id="CHEBI:29108"/>
        <label>4</label>
    </ligand>
</feature>
<feature type="binding site" evidence="2">
    <location>
        <position position="141"/>
    </location>
    <ligand>
        <name>Ca(2+)</name>
        <dbReference type="ChEBI" id="CHEBI:29108"/>
        <label>4</label>
    </ligand>
</feature>
<feature type="modified residue" description="N-acetylalanine" evidence="1">
    <location>
        <position position="2"/>
    </location>
</feature>
<feature type="modified residue" description="N6,N6,N6-trimethyllysine" evidence="3">
    <location>
        <position position="116"/>
    </location>
</feature>
<reference key="1">
    <citation type="submission" date="1988-05" db="PIR data bank">
        <authorList>
            <person name="Toda H."/>
        </authorList>
    </citation>
    <scope>PROTEIN SEQUENCE OF 2-149</scope>
    <scope>METHYLATION AT LYS-116</scope>
</reference>
<protein>
    <recommendedName>
        <fullName>Calmodulin</fullName>
        <shortName>CaM</shortName>
    </recommendedName>
</protein>
<dbReference type="PIR" id="JK0010">
    <property type="entry name" value="MCLQ"/>
</dbReference>
<dbReference type="SMR" id="P62154"/>
<dbReference type="GO" id="GO:0016460">
    <property type="term" value="C:myosin II complex"/>
    <property type="evidence" value="ECO:0007669"/>
    <property type="project" value="TreeGrafter"/>
</dbReference>
<dbReference type="GO" id="GO:0005509">
    <property type="term" value="F:calcium ion binding"/>
    <property type="evidence" value="ECO:0007669"/>
    <property type="project" value="InterPro"/>
</dbReference>
<dbReference type="CDD" id="cd00051">
    <property type="entry name" value="EFh"/>
    <property type="match status" value="2"/>
</dbReference>
<dbReference type="FunFam" id="1.10.238.10:FF:000527">
    <property type="entry name" value="Calmodulin-3"/>
    <property type="match status" value="1"/>
</dbReference>
<dbReference type="Gene3D" id="1.10.238.10">
    <property type="entry name" value="EF-hand"/>
    <property type="match status" value="3"/>
</dbReference>
<dbReference type="InterPro" id="IPR050230">
    <property type="entry name" value="CALM/Myosin/TropC-like"/>
</dbReference>
<dbReference type="InterPro" id="IPR011992">
    <property type="entry name" value="EF-hand-dom_pair"/>
</dbReference>
<dbReference type="InterPro" id="IPR018247">
    <property type="entry name" value="EF_Hand_1_Ca_BS"/>
</dbReference>
<dbReference type="InterPro" id="IPR002048">
    <property type="entry name" value="EF_hand_dom"/>
</dbReference>
<dbReference type="PANTHER" id="PTHR23048:SF0">
    <property type="entry name" value="CALMODULIN LIKE 3"/>
    <property type="match status" value="1"/>
</dbReference>
<dbReference type="PANTHER" id="PTHR23048">
    <property type="entry name" value="MYOSIN LIGHT CHAIN 1, 3"/>
    <property type="match status" value="1"/>
</dbReference>
<dbReference type="Pfam" id="PF13499">
    <property type="entry name" value="EF-hand_7"/>
    <property type="match status" value="2"/>
</dbReference>
<dbReference type="SMART" id="SM00054">
    <property type="entry name" value="EFh"/>
    <property type="match status" value="4"/>
</dbReference>
<dbReference type="SUPFAM" id="SSF47473">
    <property type="entry name" value="EF-hand"/>
    <property type="match status" value="1"/>
</dbReference>
<dbReference type="PROSITE" id="PS00018">
    <property type="entry name" value="EF_HAND_1"/>
    <property type="match status" value="4"/>
</dbReference>
<dbReference type="PROSITE" id="PS50222">
    <property type="entry name" value="EF_HAND_2"/>
    <property type="match status" value="4"/>
</dbReference>
<keyword id="KW-0007">Acetylation</keyword>
<keyword id="KW-0106">Calcium</keyword>
<keyword id="KW-0903">Direct protein sequencing</keyword>
<keyword id="KW-0479">Metal-binding</keyword>
<keyword id="KW-0488">Methylation</keyword>
<keyword id="KW-0677">Repeat</keyword>